<name>PP2B2_DROME</name>
<evidence type="ECO:0000250" key="1"/>
<evidence type="ECO:0000256" key="2">
    <source>
        <dbReference type="SAM" id="MobiDB-lite"/>
    </source>
</evidence>
<evidence type="ECO:0000269" key="3">
    <source>
    </source>
</evidence>
<evidence type="ECO:0000269" key="4">
    <source>
    </source>
</evidence>
<evidence type="ECO:0000269" key="5">
    <source>
    </source>
</evidence>
<evidence type="ECO:0000269" key="6">
    <source>
    </source>
</evidence>
<evidence type="ECO:0000305" key="7"/>
<sequence length="570" mass="63101">MSSNNQSSSVAQAATSARTVSAGSAEATDANSTASNNNNNSSSTAAAGNNSDNSSPTTGTGTGASTGKLHGGHTAVNTKERVVDSVPFPPSHKLTLAEVFDQRTGKPNHELLKQHFILEGRIEEAPALKIIQDGAALLRQEKTMIDIEAPVTVCGDIHGQFYDLMKLFEVGGSPASTKYLFLGDYVDRGYFSIECVLYLWSLKITYPQTLFLLRGNHECRHLTEYFTFKQECKIKYSERVYDACMDAFDCLPLAALMNQQFLCVHGGLSPEIHELEDIRRLDRFKEPPAFGPMCDLLWSDPLEDFGNEKNSDFYTHNSVRGCSYFYSYAACCDFLQNNNLLSIIRAHEAQDAGYRMYRKSQTTGFPSLITIFSAPNYLDVYNNKAAVLKYENNVMNIRQFNCSPHPYWLPNFMDVFTWSLPFVGEKVTEMLVNVLNICSDDELMTEESEEPLSDDEAALRKEVIRNKIRAIGKMARVFSVLREESESVLQLKGLTPTGALPLGALSGGKQSLKNAMQGFSPNHKITSFAEAKGLDAVNERMPPRRDQPPTPSEDPNQHSQQGGKNGAGHG</sequence>
<protein>
    <recommendedName>
        <fullName>Serine/threonine-protein phosphatase 2B catalytic subunit 2</fullName>
        <ecNumber>3.1.3.16</ecNumber>
    </recommendedName>
    <alternativeName>
        <fullName>Calmodulin-dependent calcineurin A2 subunit</fullName>
    </alternativeName>
</protein>
<proteinExistence type="evidence at protein level"/>
<keyword id="KW-0106">Calcium</keyword>
<keyword id="KW-0112">Calmodulin-binding</keyword>
<keyword id="KW-0378">Hydrolase</keyword>
<keyword id="KW-0408">Iron</keyword>
<keyword id="KW-0479">Metal-binding</keyword>
<keyword id="KW-0904">Protein phosphatase</keyword>
<keyword id="KW-1185">Reference proteome</keyword>
<keyword id="KW-0862">Zinc</keyword>
<organism>
    <name type="scientific">Drosophila melanogaster</name>
    <name type="common">Fruit fly</name>
    <dbReference type="NCBI Taxonomy" id="7227"/>
    <lineage>
        <taxon>Eukaryota</taxon>
        <taxon>Metazoa</taxon>
        <taxon>Ecdysozoa</taxon>
        <taxon>Arthropoda</taxon>
        <taxon>Hexapoda</taxon>
        <taxon>Insecta</taxon>
        <taxon>Pterygota</taxon>
        <taxon>Neoptera</taxon>
        <taxon>Endopterygota</taxon>
        <taxon>Diptera</taxon>
        <taxon>Brachycera</taxon>
        <taxon>Muscomorpha</taxon>
        <taxon>Ephydroidea</taxon>
        <taxon>Drosophilidae</taxon>
        <taxon>Drosophila</taxon>
        <taxon>Sophophora</taxon>
    </lineage>
</organism>
<dbReference type="EC" id="3.1.3.16"/>
<dbReference type="EMBL" id="X77768">
    <property type="protein sequence ID" value="CAA54807.1"/>
    <property type="molecule type" value="mRNA"/>
</dbReference>
<dbReference type="EMBL" id="S68806">
    <property type="protein sequence ID" value="AAB29893.1"/>
    <property type="molecule type" value="mRNA"/>
</dbReference>
<dbReference type="EMBL" id="AE014298">
    <property type="protein sequence ID" value="AAF48622.1"/>
    <property type="molecule type" value="Genomic_DNA"/>
</dbReference>
<dbReference type="EMBL" id="BT010083">
    <property type="protein sequence ID" value="AAQ22552.1"/>
    <property type="molecule type" value="mRNA"/>
</dbReference>
<dbReference type="PIR" id="S41743">
    <property type="entry name" value="S41743"/>
</dbReference>
<dbReference type="PIR" id="S70551">
    <property type="entry name" value="S70551"/>
</dbReference>
<dbReference type="RefSeq" id="NP_001245715.1">
    <property type="nucleotide sequence ID" value="NM_001258786.3"/>
</dbReference>
<dbReference type="RefSeq" id="NP_001245716.1">
    <property type="nucleotide sequence ID" value="NM_001258787.2"/>
</dbReference>
<dbReference type="RefSeq" id="NP_523373.2">
    <property type="nucleotide sequence ID" value="NM_078649.4"/>
</dbReference>
<dbReference type="BMRB" id="Q27889"/>
<dbReference type="SMR" id="Q27889"/>
<dbReference type="BioGRID" id="58962">
    <property type="interactions" value="50"/>
</dbReference>
<dbReference type="DIP" id="DIP-17529N"/>
<dbReference type="FunCoup" id="Q27889">
    <property type="interactions" value="820"/>
</dbReference>
<dbReference type="IntAct" id="Q27889">
    <property type="interactions" value="23"/>
</dbReference>
<dbReference type="STRING" id="7227.FBpp0301546"/>
<dbReference type="GlyGen" id="Q27889">
    <property type="glycosylation" value="1 site"/>
</dbReference>
<dbReference type="PaxDb" id="7227-FBpp0301546"/>
<dbReference type="DNASU" id="32624"/>
<dbReference type="EnsemblMetazoa" id="FBtr0074294">
    <property type="protein sequence ID" value="FBpp0074069"/>
    <property type="gene ID" value="FBgn0011826"/>
</dbReference>
<dbReference type="EnsemblMetazoa" id="FBtr0305593">
    <property type="protein sequence ID" value="FBpp0294044"/>
    <property type="gene ID" value="FBgn0011826"/>
</dbReference>
<dbReference type="EnsemblMetazoa" id="FBtr0309793">
    <property type="protein sequence ID" value="FBpp0301546"/>
    <property type="gene ID" value="FBgn0011826"/>
</dbReference>
<dbReference type="GeneID" id="32624"/>
<dbReference type="KEGG" id="dme:Dmel_CG9842"/>
<dbReference type="AGR" id="FB:FBgn0011826"/>
<dbReference type="CTD" id="32624"/>
<dbReference type="FlyBase" id="FBgn0011826">
    <property type="gene designation" value="Pp2B-14D"/>
</dbReference>
<dbReference type="VEuPathDB" id="VectorBase:FBgn0011826"/>
<dbReference type="eggNOG" id="KOG0375">
    <property type="taxonomic scope" value="Eukaryota"/>
</dbReference>
<dbReference type="GeneTree" id="ENSGT00940000154115"/>
<dbReference type="HOGENOM" id="CLU_004962_6_0_1"/>
<dbReference type="InParanoid" id="Q27889"/>
<dbReference type="OMA" id="YPAACNF"/>
<dbReference type="OrthoDB" id="5593063at2759"/>
<dbReference type="PhylomeDB" id="Q27889"/>
<dbReference type="Reactome" id="R-DME-2025928">
    <property type="pathway name" value="Calcineurin activates NFAT"/>
</dbReference>
<dbReference type="Reactome" id="R-DME-2871809">
    <property type="pathway name" value="FCERI mediated Ca+2 mobilization"/>
</dbReference>
<dbReference type="Reactome" id="R-DME-4086398">
    <property type="pathway name" value="Ca2+ pathway"/>
</dbReference>
<dbReference type="Reactome" id="R-DME-5607763">
    <property type="pathway name" value="CLEC7A (Dectin-1) induces NFAT activation"/>
</dbReference>
<dbReference type="SignaLink" id="Q27889"/>
<dbReference type="BioGRID-ORCS" id="32624">
    <property type="hits" value="0 hits in 1 CRISPR screen"/>
</dbReference>
<dbReference type="GenomeRNAi" id="32624"/>
<dbReference type="PRO" id="PR:Q27889"/>
<dbReference type="Proteomes" id="UP000000803">
    <property type="component" value="Chromosome X"/>
</dbReference>
<dbReference type="Bgee" id="FBgn0011826">
    <property type="expression patterns" value="Expressed in adult gamma Kenyon cell in brain and 250 other cell types or tissues"/>
</dbReference>
<dbReference type="ExpressionAtlas" id="Q27889">
    <property type="expression patterns" value="baseline and differential"/>
</dbReference>
<dbReference type="GO" id="GO:0005955">
    <property type="term" value="C:calcineurin complex"/>
    <property type="evidence" value="ECO:0000250"/>
    <property type="project" value="FlyBase"/>
</dbReference>
<dbReference type="GO" id="GO:0005737">
    <property type="term" value="C:cytoplasm"/>
    <property type="evidence" value="ECO:0000318"/>
    <property type="project" value="GO_Central"/>
</dbReference>
<dbReference type="GO" id="GO:0004723">
    <property type="term" value="F:calcium-dependent protein serine/threonine phosphatase activity"/>
    <property type="evidence" value="ECO:0000250"/>
    <property type="project" value="FlyBase"/>
</dbReference>
<dbReference type="GO" id="GO:0005516">
    <property type="term" value="F:calmodulin binding"/>
    <property type="evidence" value="ECO:0000318"/>
    <property type="project" value="GO_Central"/>
</dbReference>
<dbReference type="GO" id="GO:0033192">
    <property type="term" value="F:calmodulin-dependent protein phosphatase activity"/>
    <property type="evidence" value="ECO:0000315"/>
    <property type="project" value="UniProtKB"/>
</dbReference>
<dbReference type="GO" id="GO:0046872">
    <property type="term" value="F:metal ion binding"/>
    <property type="evidence" value="ECO:0007669"/>
    <property type="project" value="UniProtKB-KW"/>
</dbReference>
<dbReference type="GO" id="GO:0004722">
    <property type="term" value="F:protein serine/threonine phosphatase activity"/>
    <property type="evidence" value="ECO:0000250"/>
    <property type="project" value="FlyBase"/>
</dbReference>
<dbReference type="GO" id="GO:0097720">
    <property type="term" value="P:calcineurin-mediated signaling"/>
    <property type="evidence" value="ECO:0000318"/>
    <property type="project" value="GO_Central"/>
</dbReference>
<dbReference type="GO" id="GO:0007143">
    <property type="term" value="P:female meiotic nuclear division"/>
    <property type="evidence" value="ECO:0000315"/>
    <property type="project" value="FlyBase"/>
</dbReference>
<dbReference type="GO" id="GO:0051321">
    <property type="term" value="P:meiotic cell cycle"/>
    <property type="evidence" value="ECO:0000316"/>
    <property type="project" value="FlyBase"/>
</dbReference>
<dbReference type="GO" id="GO:0045995">
    <property type="term" value="P:regulation of embryonic development"/>
    <property type="evidence" value="ECO:0000315"/>
    <property type="project" value="FlyBase"/>
</dbReference>
<dbReference type="GO" id="GO:0030431">
    <property type="term" value="P:sleep"/>
    <property type="evidence" value="ECO:0000314"/>
    <property type="project" value="FlyBase"/>
</dbReference>
<dbReference type="GO" id="GO:0035220">
    <property type="term" value="P:wing disc development"/>
    <property type="evidence" value="ECO:0000315"/>
    <property type="project" value="FlyBase"/>
</dbReference>
<dbReference type="CDD" id="cd07416">
    <property type="entry name" value="MPP_PP2B"/>
    <property type="match status" value="1"/>
</dbReference>
<dbReference type="FunFam" id="3.60.21.10:FF:000002">
    <property type="entry name" value="Serine/threonine-protein phosphatase"/>
    <property type="match status" value="1"/>
</dbReference>
<dbReference type="Gene3D" id="3.60.21.10">
    <property type="match status" value="1"/>
</dbReference>
<dbReference type="InterPro" id="IPR004843">
    <property type="entry name" value="Calcineurin-like_PHP_ApaH"/>
</dbReference>
<dbReference type="InterPro" id="IPR029052">
    <property type="entry name" value="Metallo-depent_PP-like"/>
</dbReference>
<dbReference type="InterPro" id="IPR041751">
    <property type="entry name" value="MPP_PP2B"/>
</dbReference>
<dbReference type="InterPro" id="IPR043360">
    <property type="entry name" value="PP2B"/>
</dbReference>
<dbReference type="InterPro" id="IPR006186">
    <property type="entry name" value="Ser/Thr-sp_prot-phosphatase"/>
</dbReference>
<dbReference type="PANTHER" id="PTHR45673">
    <property type="entry name" value="SERINE/THREONINE-PROTEIN PHOSPHATASE 2B CATALYTIC SUBUNIT 1-RELATED"/>
    <property type="match status" value="1"/>
</dbReference>
<dbReference type="Pfam" id="PF00149">
    <property type="entry name" value="Metallophos"/>
    <property type="match status" value="1"/>
</dbReference>
<dbReference type="PRINTS" id="PR00114">
    <property type="entry name" value="STPHPHTASE"/>
</dbReference>
<dbReference type="SMART" id="SM00156">
    <property type="entry name" value="PP2Ac"/>
    <property type="match status" value="1"/>
</dbReference>
<dbReference type="SUPFAM" id="SSF56300">
    <property type="entry name" value="Metallo-dependent phosphatases"/>
    <property type="match status" value="1"/>
</dbReference>
<dbReference type="PROSITE" id="PS00125">
    <property type="entry name" value="SER_THR_PHOSPHATASE"/>
    <property type="match status" value="1"/>
</dbReference>
<accession>Q27889</accession>
<accession>Q26248</accession>
<accession>Q9VXF2</accession>
<reference key="1">
    <citation type="journal article" date="1994" name="FEBS Lett.">
        <title>Identification of a cDNA encoding a Drosophila calcium/calmodulin regulated protein phosphatase, which has its most abundant expression in the early embryo.</title>
        <authorList>
            <person name="Brown L."/>
            <person name="Chen M.X."/>
            <person name="Cohen P.T.W."/>
        </authorList>
    </citation>
    <scope>NUCLEOTIDE SEQUENCE [MRNA]</scope>
    <scope>FUNCTION</scope>
    <scope>DEVELOPMENTAL STAGE</scope>
    <source>
        <strain>Oregon-R</strain>
        <tissue>Eye imaginal disk</tissue>
    </source>
</reference>
<reference key="2">
    <citation type="journal article" date="1996" name="Genetics">
        <title>Molecular characterization of neurally expressing genes in the para sodium channel gene cluster of Drosophila.</title>
        <authorList>
            <person name="Hong C.-S."/>
            <person name="Ganetzky B."/>
        </authorList>
    </citation>
    <scope>NUCLEOTIDE SEQUENCE [GENOMIC DNA]</scope>
    <scope>TISSUE SPECIFICITY</scope>
    <scope>DEVELOPMENTAL STAGE</scope>
</reference>
<reference key="3">
    <citation type="journal article" date="2000" name="Science">
        <title>The genome sequence of Drosophila melanogaster.</title>
        <authorList>
            <person name="Adams M.D."/>
            <person name="Celniker S.E."/>
            <person name="Holt R.A."/>
            <person name="Evans C.A."/>
            <person name="Gocayne J.D."/>
            <person name="Amanatides P.G."/>
            <person name="Scherer S.E."/>
            <person name="Li P.W."/>
            <person name="Hoskins R.A."/>
            <person name="Galle R.F."/>
            <person name="George R.A."/>
            <person name="Lewis S.E."/>
            <person name="Richards S."/>
            <person name="Ashburner M."/>
            <person name="Henderson S.N."/>
            <person name="Sutton G.G."/>
            <person name="Wortman J.R."/>
            <person name="Yandell M.D."/>
            <person name="Zhang Q."/>
            <person name="Chen L.X."/>
            <person name="Brandon R.C."/>
            <person name="Rogers Y.-H.C."/>
            <person name="Blazej R.G."/>
            <person name="Champe M."/>
            <person name="Pfeiffer B.D."/>
            <person name="Wan K.H."/>
            <person name="Doyle C."/>
            <person name="Baxter E.G."/>
            <person name="Helt G."/>
            <person name="Nelson C.R."/>
            <person name="Miklos G.L.G."/>
            <person name="Abril J.F."/>
            <person name="Agbayani A."/>
            <person name="An H.-J."/>
            <person name="Andrews-Pfannkoch C."/>
            <person name="Baldwin D."/>
            <person name="Ballew R.M."/>
            <person name="Basu A."/>
            <person name="Baxendale J."/>
            <person name="Bayraktaroglu L."/>
            <person name="Beasley E.M."/>
            <person name="Beeson K.Y."/>
            <person name="Benos P.V."/>
            <person name="Berman B.P."/>
            <person name="Bhandari D."/>
            <person name="Bolshakov S."/>
            <person name="Borkova D."/>
            <person name="Botchan M.R."/>
            <person name="Bouck J."/>
            <person name="Brokstein P."/>
            <person name="Brottier P."/>
            <person name="Burtis K.C."/>
            <person name="Busam D.A."/>
            <person name="Butler H."/>
            <person name="Cadieu E."/>
            <person name="Center A."/>
            <person name="Chandra I."/>
            <person name="Cherry J.M."/>
            <person name="Cawley S."/>
            <person name="Dahlke C."/>
            <person name="Davenport L.B."/>
            <person name="Davies P."/>
            <person name="de Pablos B."/>
            <person name="Delcher A."/>
            <person name="Deng Z."/>
            <person name="Mays A.D."/>
            <person name="Dew I."/>
            <person name="Dietz S.M."/>
            <person name="Dodson K."/>
            <person name="Doup L.E."/>
            <person name="Downes M."/>
            <person name="Dugan-Rocha S."/>
            <person name="Dunkov B.C."/>
            <person name="Dunn P."/>
            <person name="Durbin K.J."/>
            <person name="Evangelista C.C."/>
            <person name="Ferraz C."/>
            <person name="Ferriera S."/>
            <person name="Fleischmann W."/>
            <person name="Fosler C."/>
            <person name="Gabrielian A.E."/>
            <person name="Garg N.S."/>
            <person name="Gelbart W.M."/>
            <person name="Glasser K."/>
            <person name="Glodek A."/>
            <person name="Gong F."/>
            <person name="Gorrell J.H."/>
            <person name="Gu Z."/>
            <person name="Guan P."/>
            <person name="Harris M."/>
            <person name="Harris N.L."/>
            <person name="Harvey D.A."/>
            <person name="Heiman T.J."/>
            <person name="Hernandez J.R."/>
            <person name="Houck J."/>
            <person name="Hostin D."/>
            <person name="Houston K.A."/>
            <person name="Howland T.J."/>
            <person name="Wei M.-H."/>
            <person name="Ibegwam C."/>
            <person name="Jalali M."/>
            <person name="Kalush F."/>
            <person name="Karpen G.H."/>
            <person name="Ke Z."/>
            <person name="Kennison J.A."/>
            <person name="Ketchum K.A."/>
            <person name="Kimmel B.E."/>
            <person name="Kodira C.D."/>
            <person name="Kraft C.L."/>
            <person name="Kravitz S."/>
            <person name="Kulp D."/>
            <person name="Lai Z."/>
            <person name="Lasko P."/>
            <person name="Lei Y."/>
            <person name="Levitsky A.A."/>
            <person name="Li J.H."/>
            <person name="Li Z."/>
            <person name="Liang Y."/>
            <person name="Lin X."/>
            <person name="Liu X."/>
            <person name="Mattei B."/>
            <person name="McIntosh T.C."/>
            <person name="McLeod M.P."/>
            <person name="McPherson D."/>
            <person name="Merkulov G."/>
            <person name="Milshina N.V."/>
            <person name="Mobarry C."/>
            <person name="Morris J."/>
            <person name="Moshrefi A."/>
            <person name="Mount S.M."/>
            <person name="Moy M."/>
            <person name="Murphy B."/>
            <person name="Murphy L."/>
            <person name="Muzny D.M."/>
            <person name="Nelson D.L."/>
            <person name="Nelson D.R."/>
            <person name="Nelson K.A."/>
            <person name="Nixon K."/>
            <person name="Nusskern D.R."/>
            <person name="Pacleb J.M."/>
            <person name="Palazzolo M."/>
            <person name="Pittman G.S."/>
            <person name="Pan S."/>
            <person name="Pollard J."/>
            <person name="Puri V."/>
            <person name="Reese M.G."/>
            <person name="Reinert K."/>
            <person name="Remington K."/>
            <person name="Saunders R.D.C."/>
            <person name="Scheeler F."/>
            <person name="Shen H."/>
            <person name="Shue B.C."/>
            <person name="Siden-Kiamos I."/>
            <person name="Simpson M."/>
            <person name="Skupski M.P."/>
            <person name="Smith T.J."/>
            <person name="Spier E."/>
            <person name="Spradling A.C."/>
            <person name="Stapleton M."/>
            <person name="Strong R."/>
            <person name="Sun E."/>
            <person name="Svirskas R."/>
            <person name="Tector C."/>
            <person name="Turner R."/>
            <person name="Venter E."/>
            <person name="Wang A.H."/>
            <person name="Wang X."/>
            <person name="Wang Z.-Y."/>
            <person name="Wassarman D.A."/>
            <person name="Weinstock G.M."/>
            <person name="Weissenbach J."/>
            <person name="Williams S.M."/>
            <person name="Woodage T."/>
            <person name="Worley K.C."/>
            <person name="Wu D."/>
            <person name="Yang S."/>
            <person name="Yao Q.A."/>
            <person name="Ye J."/>
            <person name="Yeh R.-F."/>
            <person name="Zaveri J.S."/>
            <person name="Zhan M."/>
            <person name="Zhang G."/>
            <person name="Zhao Q."/>
            <person name="Zheng L."/>
            <person name="Zheng X.H."/>
            <person name="Zhong F.N."/>
            <person name="Zhong W."/>
            <person name="Zhou X."/>
            <person name="Zhu S.C."/>
            <person name="Zhu X."/>
            <person name="Smith H.O."/>
            <person name="Gibbs R.A."/>
            <person name="Myers E.W."/>
            <person name="Rubin G.M."/>
            <person name="Venter J.C."/>
        </authorList>
    </citation>
    <scope>NUCLEOTIDE SEQUENCE [LARGE SCALE GENOMIC DNA]</scope>
    <source>
        <strain>Berkeley</strain>
    </source>
</reference>
<reference key="4">
    <citation type="journal article" date="2002" name="Genome Biol.">
        <title>Annotation of the Drosophila melanogaster euchromatic genome: a systematic review.</title>
        <authorList>
            <person name="Misra S."/>
            <person name="Crosby M.A."/>
            <person name="Mungall C.J."/>
            <person name="Matthews B.B."/>
            <person name="Campbell K.S."/>
            <person name="Hradecky P."/>
            <person name="Huang Y."/>
            <person name="Kaminker J.S."/>
            <person name="Millburn G.H."/>
            <person name="Prochnik S.E."/>
            <person name="Smith C.D."/>
            <person name="Tupy J.L."/>
            <person name="Whitfield E.J."/>
            <person name="Bayraktaroglu L."/>
            <person name="Berman B.P."/>
            <person name="Bettencourt B.R."/>
            <person name="Celniker S.E."/>
            <person name="de Grey A.D.N.J."/>
            <person name="Drysdale R.A."/>
            <person name="Harris N.L."/>
            <person name="Richter J."/>
            <person name="Russo S."/>
            <person name="Schroeder A.J."/>
            <person name="Shu S.Q."/>
            <person name="Stapleton M."/>
            <person name="Yamada C."/>
            <person name="Ashburner M."/>
            <person name="Gelbart W.M."/>
            <person name="Rubin G.M."/>
            <person name="Lewis S.E."/>
        </authorList>
    </citation>
    <scope>GENOME REANNOTATION</scope>
    <source>
        <strain>Berkeley</strain>
    </source>
</reference>
<reference key="5">
    <citation type="submission" date="2003-08" db="EMBL/GenBank/DDBJ databases">
        <authorList>
            <person name="Stapleton M."/>
            <person name="Brokstein P."/>
            <person name="Hong L."/>
            <person name="Agbayani A."/>
            <person name="Carlson J.W."/>
            <person name="Champe M."/>
            <person name="Chavez C."/>
            <person name="Dorsett V."/>
            <person name="Dresnek D."/>
            <person name="Farfan D."/>
            <person name="Frise E."/>
            <person name="George R.A."/>
            <person name="Gonzalez M."/>
            <person name="Guarin H."/>
            <person name="Kronmiller B."/>
            <person name="Li P.W."/>
            <person name="Liao G."/>
            <person name="Miranda A."/>
            <person name="Mungall C.J."/>
            <person name="Nunoo J."/>
            <person name="Pacleb J.M."/>
            <person name="Paragas V."/>
            <person name="Park S."/>
            <person name="Patel S."/>
            <person name="Phouanenavong S."/>
            <person name="Wan K.H."/>
            <person name="Yu C."/>
            <person name="Lewis S.E."/>
            <person name="Rubin G.M."/>
            <person name="Celniker S.E."/>
        </authorList>
    </citation>
    <scope>NUCLEOTIDE SEQUENCE [LARGE SCALE MRNA]</scope>
    <source>
        <strain>Berkeley</strain>
        <tissue>Embryo</tissue>
    </source>
</reference>
<reference key="6">
    <citation type="journal article" date="2006" name="Curr. Biol.">
        <title>The calcineurin regulator sra plays an essential role in female meiosis in Drosophila.</title>
        <authorList>
            <person name="Takeo S."/>
            <person name="Tsuda M."/>
            <person name="Akahori S."/>
            <person name="Matsuo T."/>
            <person name="Aigaki T."/>
        </authorList>
    </citation>
    <scope>FUNCTION</scope>
    <scope>INTERACTION WITH SRA</scope>
</reference>
<reference key="7">
    <citation type="journal article" date="2012" name="Proc. Natl. Acad. Sci. U.S.A.">
        <title>Shaggy/glycogen synthase kinase 3beta and phosphorylation of Sarah/regulator of calcineurin are essential for completion of Drosophila female meiosis.</title>
        <authorList>
            <person name="Takeo S."/>
            <person name="Swanson S.K."/>
            <person name="Nandanan K."/>
            <person name="Nakai Y."/>
            <person name="Aigaki T."/>
            <person name="Washburn M.P."/>
            <person name="Florens L."/>
            <person name="Hawley R.S."/>
        </authorList>
    </citation>
    <scope>INTERACTION WITH SRA</scope>
</reference>
<feature type="chain" id="PRO_0000058831" description="Serine/threonine-protein phosphatase 2B catalytic subunit 2">
    <location>
        <begin position="1"/>
        <end position="570"/>
    </location>
</feature>
<feature type="region of interest" description="Disordered" evidence="2">
    <location>
        <begin position="1"/>
        <end position="88"/>
    </location>
</feature>
<feature type="region of interest" description="Disordered" evidence="2">
    <location>
        <begin position="530"/>
        <end position="570"/>
    </location>
</feature>
<feature type="compositionally biased region" description="Low complexity" evidence="2">
    <location>
        <begin position="1"/>
        <end position="67"/>
    </location>
</feature>
<feature type="compositionally biased region" description="Basic and acidic residues" evidence="2">
    <location>
        <begin position="537"/>
        <end position="547"/>
    </location>
</feature>
<feature type="compositionally biased region" description="Polar residues" evidence="2">
    <location>
        <begin position="553"/>
        <end position="562"/>
    </location>
</feature>
<feature type="active site" description="Proton donor" evidence="1">
    <location>
        <position position="217"/>
    </location>
</feature>
<feature type="binding site" evidence="1">
    <location>
        <position position="156"/>
    </location>
    <ligand>
        <name>Fe cation</name>
        <dbReference type="ChEBI" id="CHEBI:24875"/>
    </ligand>
</feature>
<feature type="binding site" evidence="1">
    <location>
        <position position="158"/>
    </location>
    <ligand>
        <name>Fe cation</name>
        <dbReference type="ChEBI" id="CHEBI:24875"/>
    </ligand>
</feature>
<feature type="binding site" evidence="1">
    <location>
        <position position="184"/>
    </location>
    <ligand>
        <name>Fe cation</name>
        <dbReference type="ChEBI" id="CHEBI:24875"/>
    </ligand>
</feature>
<feature type="binding site" evidence="1">
    <location>
        <position position="184"/>
    </location>
    <ligand>
        <name>Zn(2+)</name>
        <dbReference type="ChEBI" id="CHEBI:29105"/>
    </ligand>
</feature>
<feature type="binding site" evidence="1">
    <location>
        <position position="216"/>
    </location>
    <ligand>
        <name>Zn(2+)</name>
        <dbReference type="ChEBI" id="CHEBI:29105"/>
    </ligand>
</feature>
<feature type="binding site" evidence="1">
    <location>
        <position position="265"/>
    </location>
    <ligand>
        <name>Zn(2+)</name>
        <dbReference type="ChEBI" id="CHEBI:29105"/>
    </ligand>
</feature>
<feature type="binding site" evidence="1">
    <location>
        <position position="347"/>
    </location>
    <ligand>
        <name>Zn(2+)</name>
        <dbReference type="ChEBI" id="CHEBI:29105"/>
    </ligand>
</feature>
<feature type="sequence conflict" description="In Ref. 2." evidence="7" ref="2">
    <location>
        <position position="111"/>
    </location>
</feature>
<feature type="sequence conflict" description="In Ref. 1; CAA54807." evidence="7" ref="1">
    <original>D</original>
    <variation>E</variation>
    <location>
        <position position="133"/>
    </location>
</feature>
<feature type="sequence conflict" description="In Ref. 1; CAA54807 and 2; AAB29893." evidence="7" ref="1 2">
    <original>A</original>
    <variation>Q</variation>
    <location>
        <position position="175"/>
    </location>
</feature>
<feature type="sequence conflict" description="In Ref. 1; CAA54807." evidence="7" ref="1">
    <original>SYFYSYAACCD</original>
    <variation>CY</variation>
    <location>
        <begin position="323"/>
        <end position="333"/>
    </location>
</feature>
<feature type="sequence conflict" description="In Ref. 1; CAA54807." evidence="7" ref="1">
    <original>Y</original>
    <variation>I</variation>
    <location>
        <position position="407"/>
    </location>
</feature>
<feature type="sequence conflict" description="In Ref. 1; CAA54807." evidence="7" ref="1">
    <original>L</original>
    <variation>V</variation>
    <location>
        <position position="459"/>
    </location>
</feature>
<feature type="sequence conflict" description="In Ref. 1; CAA54807." evidence="7" ref="1">
    <location>
        <position position="491"/>
    </location>
</feature>
<gene>
    <name type="primary">Pp2B-14D</name>
    <name type="ORF">CG9842</name>
</gene>
<comment type="function">
    <text evidence="3 5">Calcium-dependent, calmodulin-stimulated protein phosphatase. This subunit may have a role in the calmodulin activation of calcineurin.</text>
</comment>
<comment type="catalytic activity">
    <reaction>
        <text>O-phospho-L-seryl-[protein] + H2O = L-seryl-[protein] + phosphate</text>
        <dbReference type="Rhea" id="RHEA:20629"/>
        <dbReference type="Rhea" id="RHEA-COMP:9863"/>
        <dbReference type="Rhea" id="RHEA-COMP:11604"/>
        <dbReference type="ChEBI" id="CHEBI:15377"/>
        <dbReference type="ChEBI" id="CHEBI:29999"/>
        <dbReference type="ChEBI" id="CHEBI:43474"/>
        <dbReference type="ChEBI" id="CHEBI:83421"/>
        <dbReference type="EC" id="3.1.3.16"/>
    </reaction>
</comment>
<comment type="catalytic activity">
    <reaction>
        <text>O-phospho-L-threonyl-[protein] + H2O = L-threonyl-[protein] + phosphate</text>
        <dbReference type="Rhea" id="RHEA:47004"/>
        <dbReference type="Rhea" id="RHEA-COMP:11060"/>
        <dbReference type="Rhea" id="RHEA-COMP:11605"/>
        <dbReference type="ChEBI" id="CHEBI:15377"/>
        <dbReference type="ChEBI" id="CHEBI:30013"/>
        <dbReference type="ChEBI" id="CHEBI:43474"/>
        <dbReference type="ChEBI" id="CHEBI:61977"/>
        <dbReference type="EC" id="3.1.3.16"/>
    </reaction>
</comment>
<comment type="cofactor">
    <cofactor evidence="1">
        <name>Fe(3+)</name>
        <dbReference type="ChEBI" id="CHEBI:29034"/>
    </cofactor>
    <text evidence="1">Binds 1 Fe(3+) ion per subunit.</text>
</comment>
<comment type="cofactor">
    <cofactor evidence="1">
        <name>Zn(2+)</name>
        <dbReference type="ChEBI" id="CHEBI:29105"/>
    </cofactor>
    <text evidence="1">Binds 1 zinc ion per subunit.</text>
</comment>
<comment type="subunit">
    <text evidence="3 4">Interacts with sra in a complex that contains CanA-14F.</text>
</comment>
<comment type="interaction">
    <interactant intactId="EBI-132663">
        <id>Q27889</id>
    </interactant>
    <interactant intactId="EBI-9936648">
        <id>Q9VE19</id>
        <label>euc</label>
    </interactant>
    <organismsDiffer>false</organismsDiffer>
    <experiments>4</experiments>
</comment>
<comment type="tissue specificity">
    <text evidence="6">Expressed in CNS and PNS.</text>
</comment>
<comment type="developmental stage">
    <text evidence="5 6">Expressed both maternally and zygotically in embryos, larvae and adults.</text>
</comment>
<comment type="similarity">
    <text evidence="7">Belongs to the PPP phosphatase family. PP-2B subfamily.</text>
</comment>